<name>ARGD_STRCL</name>
<feature type="chain" id="PRO_0000112799" description="Acetylornithine aminotransferase">
    <location>
        <begin position="1"/>
        <end position="400"/>
    </location>
</feature>
<feature type="binding site" evidence="1">
    <location>
        <begin position="106"/>
        <end position="107"/>
    </location>
    <ligand>
        <name>pyridoxal 5'-phosphate</name>
        <dbReference type="ChEBI" id="CHEBI:597326"/>
    </ligand>
</feature>
<feature type="binding site" evidence="1">
    <location>
        <position position="132"/>
    </location>
    <ligand>
        <name>pyridoxal 5'-phosphate</name>
        <dbReference type="ChEBI" id="CHEBI:597326"/>
    </ligand>
</feature>
<feature type="binding site" evidence="1">
    <location>
        <position position="135"/>
    </location>
    <ligand>
        <name>N(2)-acetyl-L-ornithine</name>
        <dbReference type="ChEBI" id="CHEBI:57805"/>
    </ligand>
</feature>
<feature type="binding site" evidence="1">
    <location>
        <begin position="217"/>
        <end position="220"/>
    </location>
    <ligand>
        <name>pyridoxal 5'-phosphate</name>
        <dbReference type="ChEBI" id="CHEBI:597326"/>
    </ligand>
</feature>
<feature type="binding site" evidence="1">
    <location>
        <position position="274"/>
    </location>
    <ligand>
        <name>N(2)-acetyl-L-ornithine</name>
        <dbReference type="ChEBI" id="CHEBI:57805"/>
    </ligand>
</feature>
<feature type="binding site" evidence="1">
    <location>
        <position position="275"/>
    </location>
    <ligand>
        <name>pyridoxal 5'-phosphate</name>
        <dbReference type="ChEBI" id="CHEBI:597326"/>
    </ligand>
</feature>
<feature type="modified residue" description="N6-(pyridoxal phosphate)lysine" evidence="1">
    <location>
        <position position="246"/>
    </location>
</feature>
<dbReference type="EC" id="2.6.1.11" evidence="1"/>
<dbReference type="EMBL" id="Z49111">
    <property type="protein sequence ID" value="CAB82482.1"/>
    <property type="molecule type" value="Genomic_DNA"/>
</dbReference>
<dbReference type="SMR" id="Q9LCS5"/>
<dbReference type="STRING" id="1901.BB341_23955"/>
<dbReference type="eggNOG" id="COG4992">
    <property type="taxonomic scope" value="Bacteria"/>
</dbReference>
<dbReference type="UniPathway" id="UPA00068">
    <property type="reaction ID" value="UER00109"/>
</dbReference>
<dbReference type="GO" id="GO:0005737">
    <property type="term" value="C:cytoplasm"/>
    <property type="evidence" value="ECO:0007669"/>
    <property type="project" value="UniProtKB-SubCell"/>
</dbReference>
<dbReference type="GO" id="GO:0042802">
    <property type="term" value="F:identical protein binding"/>
    <property type="evidence" value="ECO:0007669"/>
    <property type="project" value="TreeGrafter"/>
</dbReference>
<dbReference type="GO" id="GO:0003992">
    <property type="term" value="F:N2-acetyl-L-ornithine:2-oxoglutarate 5-aminotransferase activity"/>
    <property type="evidence" value="ECO:0007669"/>
    <property type="project" value="UniProtKB-UniRule"/>
</dbReference>
<dbReference type="GO" id="GO:0030170">
    <property type="term" value="F:pyridoxal phosphate binding"/>
    <property type="evidence" value="ECO:0007669"/>
    <property type="project" value="InterPro"/>
</dbReference>
<dbReference type="GO" id="GO:0006526">
    <property type="term" value="P:L-arginine biosynthetic process"/>
    <property type="evidence" value="ECO:0007669"/>
    <property type="project" value="UniProtKB-UniRule"/>
</dbReference>
<dbReference type="CDD" id="cd00610">
    <property type="entry name" value="OAT_like"/>
    <property type="match status" value="1"/>
</dbReference>
<dbReference type="FunFam" id="3.40.640.10:FF:000004">
    <property type="entry name" value="Acetylornithine aminotransferase"/>
    <property type="match status" value="1"/>
</dbReference>
<dbReference type="Gene3D" id="3.90.1150.10">
    <property type="entry name" value="Aspartate Aminotransferase, domain 1"/>
    <property type="match status" value="1"/>
</dbReference>
<dbReference type="Gene3D" id="3.40.640.10">
    <property type="entry name" value="Type I PLP-dependent aspartate aminotransferase-like (Major domain)"/>
    <property type="match status" value="1"/>
</dbReference>
<dbReference type="HAMAP" id="MF_01107">
    <property type="entry name" value="ArgD_aminotrans_3"/>
    <property type="match status" value="1"/>
</dbReference>
<dbReference type="InterPro" id="IPR004636">
    <property type="entry name" value="AcOrn/SuccOrn_fam"/>
</dbReference>
<dbReference type="InterPro" id="IPR005814">
    <property type="entry name" value="Aminotrans_3"/>
</dbReference>
<dbReference type="InterPro" id="IPR049704">
    <property type="entry name" value="Aminotrans_3_PPA_site"/>
</dbReference>
<dbReference type="InterPro" id="IPR050103">
    <property type="entry name" value="Class-III_PLP-dep_AT"/>
</dbReference>
<dbReference type="InterPro" id="IPR015424">
    <property type="entry name" value="PyrdxlP-dep_Trfase"/>
</dbReference>
<dbReference type="InterPro" id="IPR015421">
    <property type="entry name" value="PyrdxlP-dep_Trfase_major"/>
</dbReference>
<dbReference type="InterPro" id="IPR015422">
    <property type="entry name" value="PyrdxlP-dep_Trfase_small"/>
</dbReference>
<dbReference type="NCBIfam" id="TIGR00707">
    <property type="entry name" value="argD"/>
    <property type="match status" value="1"/>
</dbReference>
<dbReference type="NCBIfam" id="NF002874">
    <property type="entry name" value="PRK03244.1"/>
    <property type="match status" value="1"/>
</dbReference>
<dbReference type="PANTHER" id="PTHR11986:SF79">
    <property type="entry name" value="ACETYLORNITHINE AMINOTRANSFERASE, MITOCHONDRIAL"/>
    <property type="match status" value="1"/>
</dbReference>
<dbReference type="PANTHER" id="PTHR11986">
    <property type="entry name" value="AMINOTRANSFERASE CLASS III"/>
    <property type="match status" value="1"/>
</dbReference>
<dbReference type="Pfam" id="PF00202">
    <property type="entry name" value="Aminotran_3"/>
    <property type="match status" value="1"/>
</dbReference>
<dbReference type="PIRSF" id="PIRSF000521">
    <property type="entry name" value="Transaminase_4ab_Lys_Orn"/>
    <property type="match status" value="1"/>
</dbReference>
<dbReference type="SUPFAM" id="SSF53383">
    <property type="entry name" value="PLP-dependent transferases"/>
    <property type="match status" value="1"/>
</dbReference>
<dbReference type="PROSITE" id="PS00600">
    <property type="entry name" value="AA_TRANSFER_CLASS_3"/>
    <property type="match status" value="1"/>
</dbReference>
<protein>
    <recommendedName>
        <fullName evidence="1">Acetylornithine aminotransferase</fullName>
        <shortName evidence="1">ACOAT</shortName>
        <ecNumber evidence="1">2.6.1.11</ecNumber>
    </recommendedName>
</protein>
<gene>
    <name evidence="1" type="primary">argD</name>
</gene>
<proteinExistence type="inferred from homology"/>
<comment type="catalytic activity">
    <reaction evidence="1">
        <text>N(2)-acetyl-L-ornithine + 2-oxoglutarate = N-acetyl-L-glutamate 5-semialdehyde + L-glutamate</text>
        <dbReference type="Rhea" id="RHEA:18049"/>
        <dbReference type="ChEBI" id="CHEBI:16810"/>
        <dbReference type="ChEBI" id="CHEBI:29123"/>
        <dbReference type="ChEBI" id="CHEBI:29985"/>
        <dbReference type="ChEBI" id="CHEBI:57805"/>
        <dbReference type="EC" id="2.6.1.11"/>
    </reaction>
</comment>
<comment type="cofactor">
    <cofactor evidence="1">
        <name>pyridoxal 5'-phosphate</name>
        <dbReference type="ChEBI" id="CHEBI:597326"/>
    </cofactor>
    <text evidence="1">Binds 1 pyridoxal phosphate per subunit.</text>
</comment>
<comment type="pathway">
    <text evidence="1">Amino-acid biosynthesis; L-arginine biosynthesis; N(2)-acetyl-L-ornithine from L-glutamate: step 4/4.</text>
</comment>
<comment type="subunit">
    <text evidence="1">Homodimer.</text>
</comment>
<comment type="subcellular location">
    <subcellularLocation>
        <location evidence="1">Cytoplasm</location>
    </subcellularLocation>
</comment>
<comment type="miscellaneous">
    <text evidence="1">May also have succinyldiaminopimelate aminotransferase activity, thus carrying out the corresponding step in lysine biosynthesis.</text>
</comment>
<comment type="similarity">
    <text evidence="1">Belongs to the class-III pyridoxal-phosphate-dependent aminotransferase family. ArgD subfamily.</text>
</comment>
<sequence length="400" mass="41968">MSNQEFAQRWQGVMIDSYGTPGLSFVRGEGSTLWDADGTAYTDFVSGLAVNALGHAHPAVVGAVSRQIASLGHISNFYSAEPTITLAERLIELFGRPGRVFFCNSGAEANETAFKIGRLTGRSRIVAAQSGFHGRTMGSLALTGQPAKREPFLPLPGDVTHVPYGDAEALRAAVTEDTAMVILEPIQGESGVVVPPKGYLRAAREITEATGTLLVLDEVQTGIGRTGHWFAAQAEGVEADVVTLAKGLGGGLPLGAAVAFGRAAELMTPGHHASTFGGNPVSCARTRVLDTIAADGLLDRVKQLGSAPDEWSVRDAAAIRWSPMSGAGLMLGIVLNEPLAPQVQLAAQKAGFLVNVPAPDVVRLIPPLVIEETEVDAFLQALPGLLDAVHERDREGQTGE</sequence>
<accession>Q9LCS5</accession>
<keyword id="KW-0028">Amino-acid biosynthesis</keyword>
<keyword id="KW-0032">Aminotransferase</keyword>
<keyword id="KW-0055">Arginine biosynthesis</keyword>
<keyword id="KW-0963">Cytoplasm</keyword>
<keyword id="KW-0663">Pyridoxal phosphate</keyword>
<keyword id="KW-0808">Transferase</keyword>
<evidence type="ECO:0000255" key="1">
    <source>
        <dbReference type="HAMAP-Rule" id="MF_01107"/>
    </source>
</evidence>
<organism>
    <name type="scientific">Streptomyces clavuligerus</name>
    <dbReference type="NCBI Taxonomy" id="1901"/>
    <lineage>
        <taxon>Bacteria</taxon>
        <taxon>Bacillati</taxon>
        <taxon>Actinomycetota</taxon>
        <taxon>Actinomycetes</taxon>
        <taxon>Kitasatosporales</taxon>
        <taxon>Streptomycetaceae</taxon>
        <taxon>Streptomyces</taxon>
    </lineage>
</organism>
<reference key="1">
    <citation type="journal article" date="2000" name="J. Mol. Microbiol. Biotechnol.">
        <title>Characterization and expression of the arginine biosynthesis gene cluster of Streptomyces clavuligerus.</title>
        <authorList>
            <person name="Rodriguez-Garcia A."/>
            <person name="de la Fuente A."/>
            <person name="Perez-Redondo R."/>
            <person name="Martin J.F."/>
            <person name="Liras P."/>
        </authorList>
    </citation>
    <scope>NUCLEOTIDE SEQUENCE [GENOMIC DNA]</scope>
    <source>
        <strain>ATCC 27064 / DSM 738 / JCM 4710 / NBRC 13307 / NCIMB 12785 / NRRL 3585 / VKM Ac-602</strain>
    </source>
</reference>